<evidence type="ECO:0000250" key="1">
    <source>
        <dbReference type="UniProtKB" id="Q9NX78"/>
    </source>
</evidence>
<evidence type="ECO:0000255" key="2"/>
<evidence type="ECO:0000269" key="3">
    <source>
    </source>
</evidence>
<evidence type="ECO:0000303" key="4">
    <source>
    </source>
</evidence>
<evidence type="ECO:0000305" key="5"/>
<evidence type="ECO:0000312" key="6">
    <source>
        <dbReference type="MGI" id="MGI:2443219"/>
    </source>
</evidence>
<dbReference type="EC" id="2.4.1.109" evidence="1"/>
<dbReference type="EMBL" id="AK031240">
    <property type="protein sequence ID" value="BAC27314.1"/>
    <property type="molecule type" value="mRNA"/>
</dbReference>
<dbReference type="EMBL" id="AK032809">
    <property type="protein sequence ID" value="BAC28033.1"/>
    <property type="status" value="ALT_INIT"/>
    <property type="molecule type" value="mRNA"/>
</dbReference>
<dbReference type="EMBL" id="AK054494">
    <property type="protein sequence ID" value="BAC35803.1"/>
    <property type="status" value="ALT_INIT"/>
    <property type="molecule type" value="mRNA"/>
</dbReference>
<dbReference type="EMBL" id="BC046454">
    <property type="protein sequence ID" value="AAH46454.1"/>
    <property type="molecule type" value="mRNA"/>
</dbReference>
<dbReference type="EMBL" id="BC046491">
    <property type="protein sequence ID" value="AAH46491.1"/>
    <property type="molecule type" value="mRNA"/>
</dbReference>
<dbReference type="EMBL" id="BC059217">
    <property type="protein sequence ID" value="AAH59217.1"/>
    <property type="status" value="ALT_INIT"/>
    <property type="molecule type" value="mRNA"/>
</dbReference>
<dbReference type="CCDS" id="CCDS26993.2">
    <molecule id="Q8BMD6-1"/>
</dbReference>
<dbReference type="CCDS" id="CCDS79318.1">
    <molecule id="Q8BMD6-2"/>
</dbReference>
<dbReference type="RefSeq" id="NP_001297513.1">
    <molecule id="Q8BMD6-2"/>
    <property type="nucleotide sequence ID" value="NM_001310584.1"/>
</dbReference>
<dbReference type="RefSeq" id="NP_766188.3">
    <molecule id="Q8BMD6-1"/>
    <property type="nucleotide sequence ID" value="NM_172600.4"/>
</dbReference>
<dbReference type="RefSeq" id="XP_030103613.1">
    <molecule id="Q8BMD6-2"/>
    <property type="nucleotide sequence ID" value="XM_030247753.2"/>
</dbReference>
<dbReference type="SMR" id="Q8BMD6"/>
<dbReference type="FunCoup" id="Q8BMD6">
    <property type="interactions" value="255"/>
</dbReference>
<dbReference type="STRING" id="10090.ENSMUSP00000107364"/>
<dbReference type="GlyGen" id="Q8BMD6">
    <property type="glycosylation" value="2 sites"/>
</dbReference>
<dbReference type="iPTMnet" id="Q8BMD6"/>
<dbReference type="PhosphoSitePlus" id="Q8BMD6"/>
<dbReference type="SwissPalm" id="Q8BMD6"/>
<dbReference type="jPOST" id="Q8BMD6"/>
<dbReference type="PaxDb" id="10090-ENSMUSP00000107364"/>
<dbReference type="PeptideAtlas" id="Q8BMD6"/>
<dbReference type="ProteomicsDB" id="260695">
    <molecule id="Q8BMD6-1"/>
</dbReference>
<dbReference type="ProteomicsDB" id="260696">
    <molecule id="Q8BMD6-2"/>
</dbReference>
<dbReference type="Pumba" id="Q8BMD6"/>
<dbReference type="Antibodypedia" id="185">
    <property type="antibodies" value="45 antibodies from 16 providers"/>
</dbReference>
<dbReference type="DNASU" id="218989"/>
<dbReference type="Ensembl" id="ENSMUST00000111735.10">
    <molecule id="Q8BMD6-1"/>
    <property type="protein sequence ID" value="ENSMUSP00000107364.3"/>
    <property type="gene ID" value="ENSMUSG00000036339.19"/>
</dbReference>
<dbReference type="Ensembl" id="ENSMUST00000124720.8">
    <molecule id="Q8BMD6-2"/>
    <property type="protein sequence ID" value="ENSMUSP00000118376.2"/>
    <property type="gene ID" value="ENSMUSG00000036339.19"/>
</dbReference>
<dbReference type="GeneID" id="218989"/>
<dbReference type="KEGG" id="mmu:218989"/>
<dbReference type="UCSC" id="uc007tjk.2">
    <molecule id="Q8BMD6-1"/>
    <property type="organism name" value="mouse"/>
</dbReference>
<dbReference type="AGR" id="MGI:2443219"/>
<dbReference type="CTD" id="54916"/>
<dbReference type="MGI" id="MGI:2443219">
    <property type="gene designation" value="Tmem260"/>
</dbReference>
<dbReference type="VEuPathDB" id="HostDB:ENSMUSG00000036339"/>
<dbReference type="eggNOG" id="ENOG502QSIA">
    <property type="taxonomic scope" value="Eukaryota"/>
</dbReference>
<dbReference type="GeneTree" id="ENSGT00390000013544"/>
<dbReference type="HOGENOM" id="CLU_019631_2_0_1"/>
<dbReference type="InParanoid" id="Q8BMD6"/>
<dbReference type="OrthoDB" id="61578at9989"/>
<dbReference type="PhylomeDB" id="Q8BMD6"/>
<dbReference type="TreeFam" id="TF329604"/>
<dbReference type="BioGRID-ORCS" id="218989">
    <property type="hits" value="3 hits in 77 CRISPR screens"/>
</dbReference>
<dbReference type="ChiTaRS" id="Tmem260">
    <property type="organism name" value="mouse"/>
</dbReference>
<dbReference type="PRO" id="PR:Q8BMD6"/>
<dbReference type="Proteomes" id="UP000000589">
    <property type="component" value="Chromosome 14"/>
</dbReference>
<dbReference type="RNAct" id="Q8BMD6">
    <property type="molecule type" value="protein"/>
</dbReference>
<dbReference type="Bgee" id="ENSMUSG00000036339">
    <property type="expression patterns" value="Expressed in retinal neural layer and 104 other cell types or tissues"/>
</dbReference>
<dbReference type="ExpressionAtlas" id="Q8BMD6">
    <property type="expression patterns" value="baseline and differential"/>
</dbReference>
<dbReference type="GO" id="GO:0005789">
    <property type="term" value="C:endoplasmic reticulum membrane"/>
    <property type="evidence" value="ECO:0000250"/>
    <property type="project" value="UniProtKB"/>
</dbReference>
<dbReference type="GO" id="GO:0004169">
    <property type="term" value="F:dolichyl-phosphate-mannose-protein mannosyltransferase activity"/>
    <property type="evidence" value="ECO:0000250"/>
    <property type="project" value="UniProtKB"/>
</dbReference>
<dbReference type="GO" id="GO:0051604">
    <property type="term" value="P:protein maturation"/>
    <property type="evidence" value="ECO:0000250"/>
    <property type="project" value="UniProtKB"/>
</dbReference>
<dbReference type="InterPro" id="IPR052724">
    <property type="entry name" value="GT117_domain-containing"/>
</dbReference>
<dbReference type="InterPro" id="IPR021280">
    <property type="entry name" value="TMEM260-like"/>
</dbReference>
<dbReference type="PANTHER" id="PTHR16214">
    <property type="entry name" value="TRANSMEMBRANE PROTEIN 260"/>
    <property type="match status" value="1"/>
</dbReference>
<dbReference type="PANTHER" id="PTHR16214:SF3">
    <property type="entry name" value="TRANSMEMBRANE PROTEIN 260"/>
    <property type="match status" value="1"/>
</dbReference>
<dbReference type="Pfam" id="PF11028">
    <property type="entry name" value="TMEM260-like"/>
    <property type="match status" value="1"/>
</dbReference>
<keyword id="KW-0025">Alternative splicing</keyword>
<keyword id="KW-0256">Endoplasmic reticulum</keyword>
<keyword id="KW-0325">Glycoprotein</keyword>
<keyword id="KW-0328">Glycosyltransferase</keyword>
<keyword id="KW-0472">Membrane</keyword>
<keyword id="KW-1185">Reference proteome</keyword>
<keyword id="KW-0808">Transferase</keyword>
<keyword id="KW-0812">Transmembrane</keyword>
<keyword id="KW-1133">Transmembrane helix</keyword>
<name>TM260_MOUSE</name>
<gene>
    <name evidence="6" type="primary">Tmem260</name>
</gene>
<feature type="chain" id="PRO_0000089906" description="Protein O-mannosyl-transferase TMEM260">
    <location>
        <begin position="1"/>
        <end position="703"/>
    </location>
</feature>
<feature type="transmembrane region" description="Helical" evidence="2">
    <location>
        <begin position="20"/>
        <end position="40"/>
    </location>
</feature>
<feature type="transmembrane region" description="Helical" evidence="2">
    <location>
        <begin position="68"/>
        <end position="88"/>
    </location>
</feature>
<feature type="transmembrane region" description="Helical" evidence="2">
    <location>
        <begin position="90"/>
        <end position="110"/>
    </location>
</feature>
<feature type="transmembrane region" description="Helical" evidence="2">
    <location>
        <begin position="137"/>
        <end position="157"/>
    </location>
</feature>
<feature type="transmembrane region" description="Helical" evidence="2">
    <location>
        <begin position="182"/>
        <end position="202"/>
    </location>
</feature>
<feature type="transmembrane region" description="Helical" evidence="2">
    <location>
        <begin position="218"/>
        <end position="238"/>
    </location>
</feature>
<feature type="transmembrane region" description="Helical" evidence="2">
    <location>
        <begin position="314"/>
        <end position="334"/>
    </location>
</feature>
<feature type="transmembrane region" description="Helical" evidence="2">
    <location>
        <begin position="352"/>
        <end position="372"/>
    </location>
</feature>
<feature type="glycosylation site" description="N-linked (GlcNAc...) asparagine" evidence="2">
    <location>
        <position position="403"/>
    </location>
</feature>
<feature type="glycosylation site" description="N-linked (GlcNAc...) asparagine" evidence="2">
    <location>
        <position position="564"/>
    </location>
</feature>
<feature type="splice variant" id="VSP_008622" description="In isoform 2." evidence="4">
    <location>
        <begin position="1"/>
        <end position="152"/>
    </location>
</feature>
<feature type="sequence conflict" description="In Ref. 1; BAC27314." evidence="5" ref="1">
    <original>W</original>
    <variation>R</variation>
    <location>
        <position position="535"/>
    </location>
</feature>
<protein>
    <recommendedName>
        <fullName evidence="5">Protein O-mannosyl-transferase TMEM260</fullName>
        <ecNumber evidence="1">2.4.1.109</ecNumber>
    </recommendedName>
    <alternativeName>
        <fullName evidence="5">Transmembrane protein 260</fullName>
    </alternativeName>
</protein>
<proteinExistence type="evidence at transcript level"/>
<reference key="1">
    <citation type="journal article" date="2005" name="Science">
        <title>The transcriptional landscape of the mammalian genome.</title>
        <authorList>
            <person name="Carninci P."/>
            <person name="Kasukawa T."/>
            <person name="Katayama S."/>
            <person name="Gough J."/>
            <person name="Frith M.C."/>
            <person name="Maeda N."/>
            <person name="Oyama R."/>
            <person name="Ravasi T."/>
            <person name="Lenhard B."/>
            <person name="Wells C."/>
            <person name="Kodzius R."/>
            <person name="Shimokawa K."/>
            <person name="Bajic V.B."/>
            <person name="Brenner S.E."/>
            <person name="Batalov S."/>
            <person name="Forrest A.R."/>
            <person name="Zavolan M."/>
            <person name="Davis M.J."/>
            <person name="Wilming L.G."/>
            <person name="Aidinis V."/>
            <person name="Allen J.E."/>
            <person name="Ambesi-Impiombato A."/>
            <person name="Apweiler R."/>
            <person name="Aturaliya R.N."/>
            <person name="Bailey T.L."/>
            <person name="Bansal M."/>
            <person name="Baxter L."/>
            <person name="Beisel K.W."/>
            <person name="Bersano T."/>
            <person name="Bono H."/>
            <person name="Chalk A.M."/>
            <person name="Chiu K.P."/>
            <person name="Choudhary V."/>
            <person name="Christoffels A."/>
            <person name="Clutterbuck D.R."/>
            <person name="Crowe M.L."/>
            <person name="Dalla E."/>
            <person name="Dalrymple B.P."/>
            <person name="de Bono B."/>
            <person name="Della Gatta G."/>
            <person name="di Bernardo D."/>
            <person name="Down T."/>
            <person name="Engstrom P."/>
            <person name="Fagiolini M."/>
            <person name="Faulkner G."/>
            <person name="Fletcher C.F."/>
            <person name="Fukushima T."/>
            <person name="Furuno M."/>
            <person name="Futaki S."/>
            <person name="Gariboldi M."/>
            <person name="Georgii-Hemming P."/>
            <person name="Gingeras T.R."/>
            <person name="Gojobori T."/>
            <person name="Green R.E."/>
            <person name="Gustincich S."/>
            <person name="Harbers M."/>
            <person name="Hayashi Y."/>
            <person name="Hensch T.K."/>
            <person name="Hirokawa N."/>
            <person name="Hill D."/>
            <person name="Huminiecki L."/>
            <person name="Iacono M."/>
            <person name="Ikeo K."/>
            <person name="Iwama A."/>
            <person name="Ishikawa T."/>
            <person name="Jakt M."/>
            <person name="Kanapin A."/>
            <person name="Katoh M."/>
            <person name="Kawasawa Y."/>
            <person name="Kelso J."/>
            <person name="Kitamura H."/>
            <person name="Kitano H."/>
            <person name="Kollias G."/>
            <person name="Krishnan S.P."/>
            <person name="Kruger A."/>
            <person name="Kummerfeld S.K."/>
            <person name="Kurochkin I.V."/>
            <person name="Lareau L.F."/>
            <person name="Lazarevic D."/>
            <person name="Lipovich L."/>
            <person name="Liu J."/>
            <person name="Liuni S."/>
            <person name="McWilliam S."/>
            <person name="Madan Babu M."/>
            <person name="Madera M."/>
            <person name="Marchionni L."/>
            <person name="Matsuda H."/>
            <person name="Matsuzawa S."/>
            <person name="Miki H."/>
            <person name="Mignone F."/>
            <person name="Miyake S."/>
            <person name="Morris K."/>
            <person name="Mottagui-Tabar S."/>
            <person name="Mulder N."/>
            <person name="Nakano N."/>
            <person name="Nakauchi H."/>
            <person name="Ng P."/>
            <person name="Nilsson R."/>
            <person name="Nishiguchi S."/>
            <person name="Nishikawa S."/>
            <person name="Nori F."/>
            <person name="Ohara O."/>
            <person name="Okazaki Y."/>
            <person name="Orlando V."/>
            <person name="Pang K.C."/>
            <person name="Pavan W.J."/>
            <person name="Pavesi G."/>
            <person name="Pesole G."/>
            <person name="Petrovsky N."/>
            <person name="Piazza S."/>
            <person name="Reed J."/>
            <person name="Reid J.F."/>
            <person name="Ring B.Z."/>
            <person name="Ringwald M."/>
            <person name="Rost B."/>
            <person name="Ruan Y."/>
            <person name="Salzberg S.L."/>
            <person name="Sandelin A."/>
            <person name="Schneider C."/>
            <person name="Schoenbach C."/>
            <person name="Sekiguchi K."/>
            <person name="Semple C.A."/>
            <person name="Seno S."/>
            <person name="Sessa L."/>
            <person name="Sheng Y."/>
            <person name="Shibata Y."/>
            <person name="Shimada H."/>
            <person name="Shimada K."/>
            <person name="Silva D."/>
            <person name="Sinclair B."/>
            <person name="Sperling S."/>
            <person name="Stupka E."/>
            <person name="Sugiura K."/>
            <person name="Sultana R."/>
            <person name="Takenaka Y."/>
            <person name="Taki K."/>
            <person name="Tammoja K."/>
            <person name="Tan S.L."/>
            <person name="Tang S."/>
            <person name="Taylor M.S."/>
            <person name="Tegner J."/>
            <person name="Teichmann S.A."/>
            <person name="Ueda H.R."/>
            <person name="van Nimwegen E."/>
            <person name="Verardo R."/>
            <person name="Wei C.L."/>
            <person name="Yagi K."/>
            <person name="Yamanishi H."/>
            <person name="Zabarovsky E."/>
            <person name="Zhu S."/>
            <person name="Zimmer A."/>
            <person name="Hide W."/>
            <person name="Bult C."/>
            <person name="Grimmond S.M."/>
            <person name="Teasdale R.D."/>
            <person name="Liu E.T."/>
            <person name="Brusic V."/>
            <person name="Quackenbush J."/>
            <person name="Wahlestedt C."/>
            <person name="Mattick J.S."/>
            <person name="Hume D.A."/>
            <person name="Kai C."/>
            <person name="Sasaki D."/>
            <person name="Tomaru Y."/>
            <person name="Fukuda S."/>
            <person name="Kanamori-Katayama M."/>
            <person name="Suzuki M."/>
            <person name="Aoki J."/>
            <person name="Arakawa T."/>
            <person name="Iida J."/>
            <person name="Imamura K."/>
            <person name="Itoh M."/>
            <person name="Kato T."/>
            <person name="Kawaji H."/>
            <person name="Kawagashira N."/>
            <person name="Kawashima T."/>
            <person name="Kojima M."/>
            <person name="Kondo S."/>
            <person name="Konno H."/>
            <person name="Nakano K."/>
            <person name="Ninomiya N."/>
            <person name="Nishio T."/>
            <person name="Okada M."/>
            <person name="Plessy C."/>
            <person name="Shibata K."/>
            <person name="Shiraki T."/>
            <person name="Suzuki S."/>
            <person name="Tagami M."/>
            <person name="Waki K."/>
            <person name="Watahiki A."/>
            <person name="Okamura-Oho Y."/>
            <person name="Suzuki H."/>
            <person name="Kawai J."/>
            <person name="Hayashizaki Y."/>
        </authorList>
    </citation>
    <scope>NUCLEOTIDE SEQUENCE [LARGE SCALE MRNA] (ISOFORMS 1 AND 2)</scope>
    <source>
        <strain>C57BL/6J</strain>
        <tissue>Forelimb</tissue>
        <tissue>Mesonephros</tissue>
        <tissue>Ovary</tissue>
    </source>
</reference>
<reference key="2">
    <citation type="journal article" date="2004" name="Genome Res.">
        <title>The status, quality, and expansion of the NIH full-length cDNA project: the Mammalian Gene Collection (MGC).</title>
        <authorList>
            <consortium name="The MGC Project Team"/>
        </authorList>
    </citation>
    <scope>NUCLEOTIDE SEQUENCE [LARGE SCALE MRNA] OF 41-703 (ISOFORM 1)</scope>
    <source>
        <strain>C57BL/6J</strain>
        <tissue>Brain</tissue>
        <tissue>Retina</tissue>
    </source>
</reference>
<reference key="3">
    <citation type="journal article" date="2023" name="Proc. Natl. Acad. Sci. U.S.A.">
        <title>The SHDRA syndrome-associated geDne TMEM260 encodes a protein-specific O-mannosyltransferase.</title>
        <authorList>
            <person name="Larsen I.S.B."/>
            <person name="Povolo L."/>
            <person name="Zhou L."/>
            <person name="Tian W."/>
            <person name="Mygind K.J."/>
            <person name="Hintze J."/>
            <person name="Jiang C."/>
            <person name="Hartill V."/>
            <person name="Prescott K."/>
            <person name="Johnson C.A."/>
            <person name="Mullegama S.V."/>
            <person name="McConkie-Rosell A."/>
            <person name="McDonald M."/>
            <person name="Hansen L."/>
            <person name="Vakhrushev S.Y."/>
            <person name="Schjoldager K.T."/>
            <person name="Clausen H."/>
            <person name="Worzfeld T."/>
            <person name="Joshi H.J."/>
            <person name="Halim A."/>
        </authorList>
    </citation>
    <scope>DISRUPTION PHENOTYPE</scope>
</reference>
<sequence>MGLHGDGGSPAAGAGPWRSGALRGSVAVFASVAAVFTLTLPRSLPGGDSGELITAAHELGVAHPPGYPLFTLLASLTITLFPFGSVAYRVNLLCGLFGAVAASLLFYTVFRLSGSHAGGILAAGVFSFSRLTWQWSIAAEVFSLNNLFVGLLMALTVRFEEATAAKERSKIAAIGAFSCGLSLCNQHTIVLYILCIIPWILFRLLKEKELTLSLLLRLTLAFSAGLLPYVYLPVSSYLSRARWTWGDQTTLRGFLTHFFREEYGTFSLAKSEVGSSVSTVLLSQVINMKTELSFNIQALAVWANICLARKDRRKSSVVWLFTGMLCLYSLFFAWRANLDISKPLFMGVVERFWLQSNAVVAVLAGLGLATLVSETNRVLHCTGIRNLEWLSAALFVAYQVYSNYSICDQRTNNVIDQFARNLLDSMPQDAIILLRGDLPGNALRYLHYCEGLRPDVSLVDQEMMTYEWYLPKMARHLPGVHFPGDRWNPVEGVLPSGMVTFNLYHFLEMNKQKETFVCIGIHEGDPTWKKDYSLWPWGSCDKLVPSKIVFNPEEWIERTRAIYNWTEAYERFGPSSWESVANEEMWQARMKTPFFIFSLAESAAVPADVKAQLYTHAYKLYKEIVYLQEEHPVNWHKNYAIACERMLRLPGTGIDPEVLLSEAIRHFHLYTQKAQNDPQRADIIAALKHLRRELQSLRNIKKV</sequence>
<comment type="function">
    <text evidence="1">O-mannosyl-transferase that transfers mannosyl residues to the hydroxyl group of serine or threonine residues of proteins. Specifically glycosylates the IPT/TIG domain of target proteins, such as MET and MST1R/RON. TMEM260-mediated O-mannosylated residues are composed of single mannose glycans that are not elongated or modified.</text>
</comment>
<comment type="catalytic activity">
    <reaction evidence="1">
        <text>a di-trans,poly-cis-dolichyl beta-D-mannosyl phosphate + L-seryl-[protein] = 3-O-(alpha-D-mannosyl)-L-seryl-[protein] + a di-trans,poly-cis-dolichyl phosphate + H(+)</text>
        <dbReference type="Rhea" id="RHEA:17377"/>
        <dbReference type="Rhea" id="RHEA-COMP:9863"/>
        <dbReference type="Rhea" id="RHEA-COMP:13546"/>
        <dbReference type="Rhea" id="RHEA-COMP:19498"/>
        <dbReference type="Rhea" id="RHEA-COMP:19501"/>
        <dbReference type="ChEBI" id="CHEBI:15378"/>
        <dbReference type="ChEBI" id="CHEBI:29999"/>
        <dbReference type="ChEBI" id="CHEBI:57683"/>
        <dbReference type="ChEBI" id="CHEBI:58211"/>
        <dbReference type="ChEBI" id="CHEBI:137321"/>
        <dbReference type="EC" id="2.4.1.109"/>
    </reaction>
    <physiologicalReaction direction="left-to-right" evidence="1">
        <dbReference type="Rhea" id="RHEA:17378"/>
    </physiologicalReaction>
</comment>
<comment type="catalytic activity">
    <reaction evidence="1">
        <text>a di-trans,poly-cis-dolichyl beta-D-mannosyl phosphate + L-threonyl-[protein] = 3-O-(alpha-D-mannosyl)-L-threonyl-[protein] + a di-trans,poly-cis-dolichyl phosphate + H(+)</text>
        <dbReference type="Rhea" id="RHEA:53396"/>
        <dbReference type="Rhea" id="RHEA-COMP:11060"/>
        <dbReference type="Rhea" id="RHEA-COMP:13547"/>
        <dbReference type="Rhea" id="RHEA-COMP:19498"/>
        <dbReference type="Rhea" id="RHEA-COMP:19501"/>
        <dbReference type="ChEBI" id="CHEBI:15378"/>
        <dbReference type="ChEBI" id="CHEBI:30013"/>
        <dbReference type="ChEBI" id="CHEBI:57683"/>
        <dbReference type="ChEBI" id="CHEBI:58211"/>
        <dbReference type="ChEBI" id="CHEBI:137323"/>
        <dbReference type="EC" id="2.4.1.109"/>
    </reaction>
    <physiologicalReaction direction="left-to-right" evidence="1">
        <dbReference type="Rhea" id="RHEA:53397"/>
    </physiologicalReaction>
</comment>
<comment type="subcellular location">
    <subcellularLocation>
        <location evidence="1">Endoplasmic reticulum membrane</location>
        <topology evidence="2">Multi-pass membrane protein</topology>
    </subcellularLocation>
</comment>
<comment type="alternative products">
    <event type="alternative splicing"/>
    <isoform>
        <id>Q8BMD6-1</id>
        <name>1</name>
        <sequence type="displayed"/>
    </isoform>
    <isoform>
        <id>Q8BMD6-2</id>
        <name>2</name>
        <sequence type="described" ref="VSP_008622"/>
    </isoform>
</comment>
<comment type="disruption phenotype">
    <text evidence="3">Receptor maturation defects and abnormal epithelial morphogenesis.</text>
</comment>
<comment type="similarity">
    <text evidence="5">Belongs to the glycosyltransferase 117 (GT117) family.</text>
</comment>
<comment type="sequence caution" evidence="5">
    <conflict type="erroneous initiation">
        <sequence resource="EMBL-CDS" id="AAH59217"/>
    </conflict>
    <text>Truncated N-terminus.</text>
</comment>
<comment type="sequence caution" evidence="5">
    <conflict type="erroneous initiation">
        <sequence resource="EMBL-CDS" id="BAC28033"/>
    </conflict>
    <text>Extended N-terminus.</text>
</comment>
<comment type="sequence caution" evidence="5">
    <conflict type="erroneous initiation">
        <sequence resource="EMBL-CDS" id="BAC35803"/>
    </conflict>
    <text>Extended N-terminus.</text>
</comment>
<organism>
    <name type="scientific">Mus musculus</name>
    <name type="common">Mouse</name>
    <dbReference type="NCBI Taxonomy" id="10090"/>
    <lineage>
        <taxon>Eukaryota</taxon>
        <taxon>Metazoa</taxon>
        <taxon>Chordata</taxon>
        <taxon>Craniata</taxon>
        <taxon>Vertebrata</taxon>
        <taxon>Euteleostomi</taxon>
        <taxon>Mammalia</taxon>
        <taxon>Eutheria</taxon>
        <taxon>Euarchontoglires</taxon>
        <taxon>Glires</taxon>
        <taxon>Rodentia</taxon>
        <taxon>Myomorpha</taxon>
        <taxon>Muroidea</taxon>
        <taxon>Muridae</taxon>
        <taxon>Murinae</taxon>
        <taxon>Mus</taxon>
        <taxon>Mus</taxon>
    </lineage>
</organism>
<accession>Q8BMD6</accession>
<accession>Q6GT69</accession>
<accession>Q80SZ4</accession>
<accession>Q8BMG3</accession>
<accession>Q8BW28</accession>
<accession>Q8BYU4</accession>